<dbReference type="EC" id="2.5.1.3" evidence="1"/>
<dbReference type="EMBL" id="CP001177">
    <property type="protein sequence ID" value="ACJ81765.1"/>
    <property type="molecule type" value="Genomic_DNA"/>
</dbReference>
<dbReference type="SMR" id="B7HT70"/>
<dbReference type="KEGG" id="bcr:BCAH187_A0487"/>
<dbReference type="HOGENOM" id="CLU_018272_3_2_9"/>
<dbReference type="UniPathway" id="UPA00060">
    <property type="reaction ID" value="UER00141"/>
</dbReference>
<dbReference type="Proteomes" id="UP000002214">
    <property type="component" value="Chromosome"/>
</dbReference>
<dbReference type="GO" id="GO:0005737">
    <property type="term" value="C:cytoplasm"/>
    <property type="evidence" value="ECO:0007669"/>
    <property type="project" value="TreeGrafter"/>
</dbReference>
<dbReference type="GO" id="GO:0000287">
    <property type="term" value="F:magnesium ion binding"/>
    <property type="evidence" value="ECO:0007669"/>
    <property type="project" value="UniProtKB-UniRule"/>
</dbReference>
<dbReference type="GO" id="GO:0004789">
    <property type="term" value="F:thiamine-phosphate diphosphorylase activity"/>
    <property type="evidence" value="ECO:0007669"/>
    <property type="project" value="UniProtKB-UniRule"/>
</dbReference>
<dbReference type="GO" id="GO:0009228">
    <property type="term" value="P:thiamine biosynthetic process"/>
    <property type="evidence" value="ECO:0007669"/>
    <property type="project" value="UniProtKB-KW"/>
</dbReference>
<dbReference type="GO" id="GO:0009229">
    <property type="term" value="P:thiamine diphosphate biosynthetic process"/>
    <property type="evidence" value="ECO:0007669"/>
    <property type="project" value="UniProtKB-UniRule"/>
</dbReference>
<dbReference type="CDD" id="cd00564">
    <property type="entry name" value="TMP_TenI"/>
    <property type="match status" value="1"/>
</dbReference>
<dbReference type="FunFam" id="3.20.20.70:FF:000096">
    <property type="entry name" value="Thiamine-phosphate synthase"/>
    <property type="match status" value="1"/>
</dbReference>
<dbReference type="Gene3D" id="3.20.20.70">
    <property type="entry name" value="Aldolase class I"/>
    <property type="match status" value="1"/>
</dbReference>
<dbReference type="HAMAP" id="MF_00097">
    <property type="entry name" value="TMP_synthase"/>
    <property type="match status" value="1"/>
</dbReference>
<dbReference type="InterPro" id="IPR013785">
    <property type="entry name" value="Aldolase_TIM"/>
</dbReference>
<dbReference type="InterPro" id="IPR036206">
    <property type="entry name" value="ThiamineP_synth_sf"/>
</dbReference>
<dbReference type="InterPro" id="IPR022998">
    <property type="entry name" value="ThiamineP_synth_TenI"/>
</dbReference>
<dbReference type="InterPro" id="IPR034291">
    <property type="entry name" value="TMP_synthase"/>
</dbReference>
<dbReference type="NCBIfam" id="TIGR00693">
    <property type="entry name" value="thiE"/>
    <property type="match status" value="1"/>
</dbReference>
<dbReference type="PANTHER" id="PTHR20857">
    <property type="entry name" value="THIAMINE-PHOSPHATE PYROPHOSPHORYLASE"/>
    <property type="match status" value="1"/>
</dbReference>
<dbReference type="PANTHER" id="PTHR20857:SF15">
    <property type="entry name" value="THIAMINE-PHOSPHATE SYNTHASE"/>
    <property type="match status" value="1"/>
</dbReference>
<dbReference type="Pfam" id="PF02581">
    <property type="entry name" value="TMP-TENI"/>
    <property type="match status" value="1"/>
</dbReference>
<dbReference type="SUPFAM" id="SSF51391">
    <property type="entry name" value="Thiamin phosphate synthase"/>
    <property type="match status" value="1"/>
</dbReference>
<gene>
    <name evidence="1" type="primary">thiE</name>
    <name type="ordered locus">BCAH187_A0487</name>
</gene>
<comment type="function">
    <text evidence="1">Condenses 4-methyl-5-(beta-hydroxyethyl)thiazole monophosphate (THZ-P) and 2-methyl-4-amino-5-hydroxymethyl pyrimidine pyrophosphate (HMP-PP) to form thiamine monophosphate (TMP).</text>
</comment>
<comment type="catalytic activity">
    <reaction evidence="1">
        <text>2-[(2R,5Z)-2-carboxy-4-methylthiazol-5(2H)-ylidene]ethyl phosphate + 4-amino-2-methyl-5-(diphosphooxymethyl)pyrimidine + 2 H(+) = thiamine phosphate + CO2 + diphosphate</text>
        <dbReference type="Rhea" id="RHEA:47844"/>
        <dbReference type="ChEBI" id="CHEBI:15378"/>
        <dbReference type="ChEBI" id="CHEBI:16526"/>
        <dbReference type="ChEBI" id="CHEBI:33019"/>
        <dbReference type="ChEBI" id="CHEBI:37575"/>
        <dbReference type="ChEBI" id="CHEBI:57841"/>
        <dbReference type="ChEBI" id="CHEBI:62899"/>
        <dbReference type="EC" id="2.5.1.3"/>
    </reaction>
</comment>
<comment type="catalytic activity">
    <reaction evidence="1">
        <text>2-(2-carboxy-4-methylthiazol-5-yl)ethyl phosphate + 4-amino-2-methyl-5-(diphosphooxymethyl)pyrimidine + 2 H(+) = thiamine phosphate + CO2 + diphosphate</text>
        <dbReference type="Rhea" id="RHEA:47848"/>
        <dbReference type="ChEBI" id="CHEBI:15378"/>
        <dbReference type="ChEBI" id="CHEBI:16526"/>
        <dbReference type="ChEBI" id="CHEBI:33019"/>
        <dbReference type="ChEBI" id="CHEBI:37575"/>
        <dbReference type="ChEBI" id="CHEBI:57841"/>
        <dbReference type="ChEBI" id="CHEBI:62890"/>
        <dbReference type="EC" id="2.5.1.3"/>
    </reaction>
</comment>
<comment type="catalytic activity">
    <reaction evidence="1">
        <text>4-methyl-5-(2-phosphooxyethyl)-thiazole + 4-amino-2-methyl-5-(diphosphooxymethyl)pyrimidine + H(+) = thiamine phosphate + diphosphate</text>
        <dbReference type="Rhea" id="RHEA:22328"/>
        <dbReference type="ChEBI" id="CHEBI:15378"/>
        <dbReference type="ChEBI" id="CHEBI:33019"/>
        <dbReference type="ChEBI" id="CHEBI:37575"/>
        <dbReference type="ChEBI" id="CHEBI:57841"/>
        <dbReference type="ChEBI" id="CHEBI:58296"/>
        <dbReference type="EC" id="2.5.1.3"/>
    </reaction>
</comment>
<comment type="cofactor">
    <cofactor evidence="1">
        <name>Mg(2+)</name>
        <dbReference type="ChEBI" id="CHEBI:18420"/>
    </cofactor>
    <text evidence="1">Binds 1 Mg(2+) ion per subunit.</text>
</comment>
<comment type="pathway">
    <text evidence="1">Cofactor biosynthesis; thiamine diphosphate biosynthesis; thiamine phosphate from 4-amino-2-methyl-5-diphosphomethylpyrimidine and 4-methyl-5-(2-phosphoethyl)-thiazole: step 1/1.</text>
</comment>
<comment type="similarity">
    <text evidence="1">Belongs to the thiamine-phosphate synthase family.</text>
</comment>
<evidence type="ECO:0000255" key="1">
    <source>
        <dbReference type="HAMAP-Rule" id="MF_00097"/>
    </source>
</evidence>
<proteinExistence type="inferred from homology"/>
<keyword id="KW-0460">Magnesium</keyword>
<keyword id="KW-0479">Metal-binding</keyword>
<keyword id="KW-0784">Thiamine biosynthesis</keyword>
<keyword id="KW-0808">Transferase</keyword>
<organism>
    <name type="scientific">Bacillus cereus (strain AH187)</name>
    <dbReference type="NCBI Taxonomy" id="405534"/>
    <lineage>
        <taxon>Bacteria</taxon>
        <taxon>Bacillati</taxon>
        <taxon>Bacillota</taxon>
        <taxon>Bacilli</taxon>
        <taxon>Bacillales</taxon>
        <taxon>Bacillaceae</taxon>
        <taxon>Bacillus</taxon>
        <taxon>Bacillus cereus group</taxon>
    </lineage>
</organism>
<name>THIE_BACC7</name>
<sequence>MSRISKSEMSRLLSVYFIMGSNNCTKDPLQVLREALEGGITIFQFREKGEGALTEEKRICFAKELQAICKEYGVPFIVNDDVELALELDADGVHVGQDDEGITSVREKMGDKIVGVSTHTIEEARWAIENGADYLGVGPIFPTSTKKDTKAVQGTKGLAHFREQGITIPIVGIGGISIENTASVIEAGADGVSVISAISLAESAYESTKRLVEEVSNSL</sequence>
<feature type="chain" id="PRO_1000117297" description="Thiamine-phosphate synthase">
    <location>
        <begin position="1"/>
        <end position="219"/>
    </location>
</feature>
<feature type="binding site" evidence="1">
    <location>
        <begin position="44"/>
        <end position="48"/>
    </location>
    <ligand>
        <name>4-amino-2-methyl-5-(diphosphooxymethyl)pyrimidine</name>
        <dbReference type="ChEBI" id="CHEBI:57841"/>
    </ligand>
</feature>
<feature type="binding site" evidence="1">
    <location>
        <position position="79"/>
    </location>
    <ligand>
        <name>4-amino-2-methyl-5-(diphosphooxymethyl)pyrimidine</name>
        <dbReference type="ChEBI" id="CHEBI:57841"/>
    </ligand>
</feature>
<feature type="binding site" evidence="1">
    <location>
        <position position="80"/>
    </location>
    <ligand>
        <name>Mg(2+)</name>
        <dbReference type="ChEBI" id="CHEBI:18420"/>
    </ligand>
</feature>
<feature type="binding site" evidence="1">
    <location>
        <position position="99"/>
    </location>
    <ligand>
        <name>Mg(2+)</name>
        <dbReference type="ChEBI" id="CHEBI:18420"/>
    </ligand>
</feature>
<feature type="binding site" evidence="1">
    <location>
        <position position="117"/>
    </location>
    <ligand>
        <name>4-amino-2-methyl-5-(diphosphooxymethyl)pyrimidine</name>
        <dbReference type="ChEBI" id="CHEBI:57841"/>
    </ligand>
</feature>
<feature type="binding site" evidence="1">
    <location>
        <begin position="143"/>
        <end position="145"/>
    </location>
    <ligand>
        <name>2-[(2R,5Z)-2-carboxy-4-methylthiazol-5(2H)-ylidene]ethyl phosphate</name>
        <dbReference type="ChEBI" id="CHEBI:62899"/>
    </ligand>
</feature>
<feature type="binding site" evidence="1">
    <location>
        <position position="146"/>
    </location>
    <ligand>
        <name>4-amino-2-methyl-5-(diphosphooxymethyl)pyrimidine</name>
        <dbReference type="ChEBI" id="CHEBI:57841"/>
    </ligand>
</feature>
<feature type="binding site" evidence="1">
    <location>
        <position position="175"/>
    </location>
    <ligand>
        <name>2-[(2R,5Z)-2-carboxy-4-methylthiazol-5(2H)-ylidene]ethyl phosphate</name>
        <dbReference type="ChEBI" id="CHEBI:62899"/>
    </ligand>
</feature>
<feature type="binding site" evidence="1">
    <location>
        <begin position="195"/>
        <end position="196"/>
    </location>
    <ligand>
        <name>2-[(2R,5Z)-2-carboxy-4-methylthiazol-5(2H)-ylidene]ethyl phosphate</name>
        <dbReference type="ChEBI" id="CHEBI:62899"/>
    </ligand>
</feature>
<protein>
    <recommendedName>
        <fullName evidence="1">Thiamine-phosphate synthase</fullName>
        <shortName evidence="1">TP synthase</shortName>
        <shortName evidence="1">TPS</shortName>
        <ecNumber evidence="1">2.5.1.3</ecNumber>
    </recommendedName>
    <alternativeName>
        <fullName evidence="1">Thiamine-phosphate pyrophosphorylase</fullName>
        <shortName evidence="1">TMP pyrophosphorylase</shortName>
        <shortName evidence="1">TMP-PPase</shortName>
    </alternativeName>
</protein>
<accession>B7HT70</accession>
<reference key="1">
    <citation type="submission" date="2008-10" db="EMBL/GenBank/DDBJ databases">
        <title>Genome sequence of Bacillus cereus AH187.</title>
        <authorList>
            <person name="Dodson R.J."/>
            <person name="Durkin A.S."/>
            <person name="Rosovitz M.J."/>
            <person name="Rasko D.A."/>
            <person name="Kolsto A.B."/>
            <person name="Okstad O.A."/>
            <person name="Ravel J."/>
            <person name="Sutton G."/>
        </authorList>
    </citation>
    <scope>NUCLEOTIDE SEQUENCE [LARGE SCALE GENOMIC DNA]</scope>
    <source>
        <strain>AH187</strain>
    </source>
</reference>